<comment type="function">
    <text evidence="1">Required for accurate and efficient protein synthesis under certain stress conditions. May act as a fidelity factor of the translation reaction, by catalyzing a one-codon backward translocation of tRNAs on improperly translocated ribosomes. Back-translocation proceeds from a post-translocation (POST) complex to a pre-translocation (PRE) complex, thus giving elongation factor G a second chance to translocate the tRNAs correctly. Binds to ribosomes in a GTP-dependent manner.</text>
</comment>
<comment type="catalytic activity">
    <reaction evidence="1">
        <text>GTP + H2O = GDP + phosphate + H(+)</text>
        <dbReference type="Rhea" id="RHEA:19669"/>
        <dbReference type="ChEBI" id="CHEBI:15377"/>
        <dbReference type="ChEBI" id="CHEBI:15378"/>
        <dbReference type="ChEBI" id="CHEBI:37565"/>
        <dbReference type="ChEBI" id="CHEBI:43474"/>
        <dbReference type="ChEBI" id="CHEBI:58189"/>
        <dbReference type="EC" id="3.6.5.n1"/>
    </reaction>
</comment>
<comment type="subcellular location">
    <subcellularLocation>
        <location evidence="1">Cell inner membrane</location>
        <topology evidence="1">Peripheral membrane protein</topology>
        <orientation evidence="1">Cytoplasmic side</orientation>
    </subcellularLocation>
</comment>
<comment type="similarity">
    <text evidence="1">Belongs to the TRAFAC class translation factor GTPase superfamily. Classic translation factor GTPase family. LepA subfamily.</text>
</comment>
<name>LEPA_SALPK</name>
<dbReference type="EC" id="3.6.5.n1" evidence="1"/>
<dbReference type="EMBL" id="FM200053">
    <property type="protein sequence ID" value="CAR58382.1"/>
    <property type="molecule type" value="Genomic_DNA"/>
</dbReference>
<dbReference type="RefSeq" id="WP_000790158.1">
    <property type="nucleotide sequence ID" value="NC_011147.1"/>
</dbReference>
<dbReference type="SMR" id="B5BAS8"/>
<dbReference type="KEGG" id="sek:SSPA0267"/>
<dbReference type="HOGENOM" id="CLU_009995_3_3_6"/>
<dbReference type="Proteomes" id="UP000001869">
    <property type="component" value="Chromosome"/>
</dbReference>
<dbReference type="GO" id="GO:0005886">
    <property type="term" value="C:plasma membrane"/>
    <property type="evidence" value="ECO:0007669"/>
    <property type="project" value="UniProtKB-SubCell"/>
</dbReference>
<dbReference type="GO" id="GO:0005525">
    <property type="term" value="F:GTP binding"/>
    <property type="evidence" value="ECO:0007669"/>
    <property type="project" value="UniProtKB-UniRule"/>
</dbReference>
<dbReference type="GO" id="GO:0003924">
    <property type="term" value="F:GTPase activity"/>
    <property type="evidence" value="ECO:0007669"/>
    <property type="project" value="UniProtKB-UniRule"/>
</dbReference>
<dbReference type="GO" id="GO:0097216">
    <property type="term" value="F:guanosine tetraphosphate binding"/>
    <property type="evidence" value="ECO:0007669"/>
    <property type="project" value="UniProtKB-ARBA"/>
</dbReference>
<dbReference type="GO" id="GO:0043022">
    <property type="term" value="F:ribosome binding"/>
    <property type="evidence" value="ECO:0007669"/>
    <property type="project" value="UniProtKB-UniRule"/>
</dbReference>
<dbReference type="GO" id="GO:0003746">
    <property type="term" value="F:translation elongation factor activity"/>
    <property type="evidence" value="ECO:0007669"/>
    <property type="project" value="UniProtKB-UniRule"/>
</dbReference>
<dbReference type="GO" id="GO:0045727">
    <property type="term" value="P:positive regulation of translation"/>
    <property type="evidence" value="ECO:0007669"/>
    <property type="project" value="UniProtKB-UniRule"/>
</dbReference>
<dbReference type="CDD" id="cd03699">
    <property type="entry name" value="EF4_II"/>
    <property type="match status" value="1"/>
</dbReference>
<dbReference type="CDD" id="cd16260">
    <property type="entry name" value="EF4_III"/>
    <property type="match status" value="1"/>
</dbReference>
<dbReference type="CDD" id="cd01890">
    <property type="entry name" value="LepA"/>
    <property type="match status" value="1"/>
</dbReference>
<dbReference type="CDD" id="cd03709">
    <property type="entry name" value="lepA_C"/>
    <property type="match status" value="1"/>
</dbReference>
<dbReference type="FunFam" id="3.30.70.240:FF:000005">
    <property type="entry name" value="Elongation factor 4"/>
    <property type="match status" value="1"/>
</dbReference>
<dbReference type="FunFam" id="3.40.50.300:FF:000078">
    <property type="entry name" value="Elongation factor 4"/>
    <property type="match status" value="1"/>
</dbReference>
<dbReference type="FunFam" id="2.40.30.10:FF:000015">
    <property type="entry name" value="Translation factor GUF1, mitochondrial"/>
    <property type="match status" value="1"/>
</dbReference>
<dbReference type="FunFam" id="3.30.70.2570:FF:000001">
    <property type="entry name" value="Translation factor GUF1, mitochondrial"/>
    <property type="match status" value="1"/>
</dbReference>
<dbReference type="FunFam" id="3.30.70.870:FF:000004">
    <property type="entry name" value="Translation factor GUF1, mitochondrial"/>
    <property type="match status" value="1"/>
</dbReference>
<dbReference type="Gene3D" id="3.30.70.240">
    <property type="match status" value="1"/>
</dbReference>
<dbReference type="Gene3D" id="3.30.70.2570">
    <property type="entry name" value="Elongation factor 4, C-terminal domain"/>
    <property type="match status" value="1"/>
</dbReference>
<dbReference type="Gene3D" id="3.30.70.870">
    <property type="entry name" value="Elongation Factor G (Translational Gtpase), domain 3"/>
    <property type="match status" value="1"/>
</dbReference>
<dbReference type="Gene3D" id="3.40.50.300">
    <property type="entry name" value="P-loop containing nucleotide triphosphate hydrolases"/>
    <property type="match status" value="1"/>
</dbReference>
<dbReference type="Gene3D" id="2.40.30.10">
    <property type="entry name" value="Translation factors"/>
    <property type="match status" value="1"/>
</dbReference>
<dbReference type="HAMAP" id="MF_00071">
    <property type="entry name" value="LepA"/>
    <property type="match status" value="1"/>
</dbReference>
<dbReference type="InterPro" id="IPR006297">
    <property type="entry name" value="EF-4"/>
</dbReference>
<dbReference type="InterPro" id="IPR035647">
    <property type="entry name" value="EFG_III/V"/>
</dbReference>
<dbReference type="InterPro" id="IPR000640">
    <property type="entry name" value="EFG_V-like"/>
</dbReference>
<dbReference type="InterPro" id="IPR004161">
    <property type="entry name" value="EFTu-like_2"/>
</dbReference>
<dbReference type="InterPro" id="IPR031157">
    <property type="entry name" value="G_TR_CS"/>
</dbReference>
<dbReference type="InterPro" id="IPR038363">
    <property type="entry name" value="LepA_C_sf"/>
</dbReference>
<dbReference type="InterPro" id="IPR013842">
    <property type="entry name" value="LepA_CTD"/>
</dbReference>
<dbReference type="InterPro" id="IPR035654">
    <property type="entry name" value="LepA_IV"/>
</dbReference>
<dbReference type="InterPro" id="IPR027417">
    <property type="entry name" value="P-loop_NTPase"/>
</dbReference>
<dbReference type="InterPro" id="IPR005225">
    <property type="entry name" value="Small_GTP-bd"/>
</dbReference>
<dbReference type="InterPro" id="IPR000795">
    <property type="entry name" value="T_Tr_GTP-bd_dom"/>
</dbReference>
<dbReference type="NCBIfam" id="TIGR01393">
    <property type="entry name" value="lepA"/>
    <property type="match status" value="1"/>
</dbReference>
<dbReference type="NCBIfam" id="TIGR00231">
    <property type="entry name" value="small_GTP"/>
    <property type="match status" value="1"/>
</dbReference>
<dbReference type="PANTHER" id="PTHR43512:SF4">
    <property type="entry name" value="TRANSLATION FACTOR GUF1 HOMOLOG, CHLOROPLASTIC"/>
    <property type="match status" value="1"/>
</dbReference>
<dbReference type="PANTHER" id="PTHR43512">
    <property type="entry name" value="TRANSLATION FACTOR GUF1-RELATED"/>
    <property type="match status" value="1"/>
</dbReference>
<dbReference type="Pfam" id="PF00679">
    <property type="entry name" value="EFG_C"/>
    <property type="match status" value="1"/>
</dbReference>
<dbReference type="Pfam" id="PF00009">
    <property type="entry name" value="GTP_EFTU"/>
    <property type="match status" value="1"/>
</dbReference>
<dbReference type="Pfam" id="PF03144">
    <property type="entry name" value="GTP_EFTU_D2"/>
    <property type="match status" value="1"/>
</dbReference>
<dbReference type="Pfam" id="PF06421">
    <property type="entry name" value="LepA_C"/>
    <property type="match status" value="1"/>
</dbReference>
<dbReference type="PRINTS" id="PR00315">
    <property type="entry name" value="ELONGATNFCT"/>
</dbReference>
<dbReference type="SUPFAM" id="SSF54980">
    <property type="entry name" value="EF-G C-terminal domain-like"/>
    <property type="match status" value="2"/>
</dbReference>
<dbReference type="SUPFAM" id="SSF52540">
    <property type="entry name" value="P-loop containing nucleoside triphosphate hydrolases"/>
    <property type="match status" value="1"/>
</dbReference>
<dbReference type="PROSITE" id="PS00301">
    <property type="entry name" value="G_TR_1"/>
    <property type="match status" value="1"/>
</dbReference>
<dbReference type="PROSITE" id="PS51722">
    <property type="entry name" value="G_TR_2"/>
    <property type="match status" value="1"/>
</dbReference>
<feature type="chain" id="PRO_1000092444" description="Elongation factor 4">
    <location>
        <begin position="1"/>
        <end position="599"/>
    </location>
</feature>
<feature type="domain" description="tr-type G">
    <location>
        <begin position="2"/>
        <end position="184"/>
    </location>
</feature>
<feature type="binding site" evidence="1">
    <location>
        <begin position="14"/>
        <end position="19"/>
    </location>
    <ligand>
        <name>GTP</name>
        <dbReference type="ChEBI" id="CHEBI:37565"/>
    </ligand>
</feature>
<feature type="binding site" evidence="1">
    <location>
        <begin position="131"/>
        <end position="134"/>
    </location>
    <ligand>
        <name>GTP</name>
        <dbReference type="ChEBI" id="CHEBI:37565"/>
    </ligand>
</feature>
<protein>
    <recommendedName>
        <fullName evidence="1">Elongation factor 4</fullName>
        <shortName evidence="1">EF-4</shortName>
        <ecNumber evidence="1">3.6.5.n1</ecNumber>
    </recommendedName>
    <alternativeName>
        <fullName evidence="1">Ribosomal back-translocase LepA</fullName>
    </alternativeName>
</protein>
<organism>
    <name type="scientific">Salmonella paratyphi A (strain AKU_12601)</name>
    <dbReference type="NCBI Taxonomy" id="554290"/>
    <lineage>
        <taxon>Bacteria</taxon>
        <taxon>Pseudomonadati</taxon>
        <taxon>Pseudomonadota</taxon>
        <taxon>Gammaproteobacteria</taxon>
        <taxon>Enterobacterales</taxon>
        <taxon>Enterobacteriaceae</taxon>
        <taxon>Salmonella</taxon>
    </lineage>
</organism>
<keyword id="KW-0997">Cell inner membrane</keyword>
<keyword id="KW-1003">Cell membrane</keyword>
<keyword id="KW-0342">GTP-binding</keyword>
<keyword id="KW-0378">Hydrolase</keyword>
<keyword id="KW-0472">Membrane</keyword>
<keyword id="KW-0547">Nucleotide-binding</keyword>
<keyword id="KW-0648">Protein biosynthesis</keyword>
<accession>B5BAS8</accession>
<evidence type="ECO:0000255" key="1">
    <source>
        <dbReference type="HAMAP-Rule" id="MF_00071"/>
    </source>
</evidence>
<gene>
    <name evidence="1" type="primary">lepA</name>
    <name type="ordered locus">SSPA0267</name>
</gene>
<sequence>MKNIRNFSIIAHIDHGKSTLSDRIIQICGGLSDREMEAQVLDSMDLERERGITIKAQSVTLDFKASDGETYQLNFIDTPGHVDFSYEVSRSLAACEGALLVVDAGQGVEAQTLANCYTAMEMDLEVVPVLNKIDLPAADPERVAEEIEDIVGIDATDAVRCSAKTGVGVTDVLERLVRDIPPPQGDPDGPLQALIIDSWFDNYLGVVSLVRIKNGTMRKGDKIKVMSTRQTYNADRLGIFTPKQVDRTELKCGEVGWLVCAIKDILGAPVGDTLTSARNPAEKALPGFKKVKPQVYAGLFPVSSDDYESFRDALGKLSLNDASLFYEPESSSALGFGFRCGFLGLLHMEIIQERLEREYDLDLITTAPTVVYEVETTAKETIYVDSPSKLPPLNNIYELREPIAECHMLLPQAYLGNVITLCIEKRGVQTNMVYHGNQVALTYEIPMAEVVLDFFDRLKSTSRGYASLDYNFKRFQASDMVRVDVLINNERVDALALITHRDNSQSRGRELVEKMKDLIPRQQFDIAIQAAIGTHIIARSTVKQLRKNVLAKCYGGDISRKKKLLQKQKEGKKRMKQIGNVELPQEAFLAILHVGKDNK</sequence>
<proteinExistence type="inferred from homology"/>
<reference key="1">
    <citation type="journal article" date="2009" name="BMC Genomics">
        <title>Pseudogene accumulation in the evolutionary histories of Salmonella enterica serovars Paratyphi A and Typhi.</title>
        <authorList>
            <person name="Holt K.E."/>
            <person name="Thomson N.R."/>
            <person name="Wain J."/>
            <person name="Langridge G.C."/>
            <person name="Hasan R."/>
            <person name="Bhutta Z.A."/>
            <person name="Quail M.A."/>
            <person name="Norbertczak H."/>
            <person name="Walker D."/>
            <person name="Simmonds M."/>
            <person name="White B."/>
            <person name="Bason N."/>
            <person name="Mungall K."/>
            <person name="Dougan G."/>
            <person name="Parkhill J."/>
        </authorList>
    </citation>
    <scope>NUCLEOTIDE SEQUENCE [LARGE SCALE GENOMIC DNA]</scope>
    <source>
        <strain>AKU_12601</strain>
    </source>
</reference>